<name>REP2_ZYGBI</name>
<proteinExistence type="predicted"/>
<geneLocation type="plasmid">
    <name>pSB3</name>
</geneLocation>
<protein>
    <recommendedName>
        <fullName>Trans-acting factor C</fullName>
    </recommendedName>
    <alternativeName>
        <fullName>REP2</fullName>
    </alternativeName>
</protein>
<accession>P13781</accession>
<sequence length="178" mass="20298">MPPRRTKKLKTIPDTLLIGSIFTIFENLEAHAYLLPEDDKILWDQYFSEFDALKYLPTRDGETLQEMLSEGAPSTSVLHSEMELSIFDQVQVPHPSQTTNKERYMMLMDGIKYVLGSVTRVNAEKAGDIIKDYNVPVNLTEREMNRAKAFCNGWQSVXLNESGRKLVMHSAGGEFQLK</sequence>
<gene>
    <name type="primary">C</name>
</gene>
<reference key="1">
    <citation type="journal article" date="1985" name="Nucleic Acids Res.">
        <title>Physical and functional structure of a yeast plasmid, pSB3, isolated from Zygosaccharomyces bisporus.</title>
        <authorList>
            <person name="Toh-e A."/>
            <person name="Utatsu I."/>
        </authorList>
    </citation>
    <scope>NUCLEOTIDE SEQUENCE [GENOMIC DNA]</scope>
</reference>
<keyword id="KW-0614">Plasmid</keyword>
<keyword id="KW-0616">Plasmid partition</keyword>
<comment type="function">
    <text>Plasmid partition require REP1, REP2, and a cis-acting DNA sequence (known as STB).</text>
</comment>
<dbReference type="EMBL" id="X02608">
    <property type="protein sequence ID" value="CAA26453.1"/>
    <property type="status" value="ALT_TERM"/>
    <property type="molecule type" value="Genomic_DNA"/>
</dbReference>
<dbReference type="PIR" id="S28090">
    <property type="entry name" value="S28090"/>
</dbReference>
<dbReference type="GO" id="GO:0030541">
    <property type="term" value="P:plasmid partitioning"/>
    <property type="evidence" value="ECO:0007669"/>
    <property type="project" value="UniProtKB-KW"/>
</dbReference>
<feature type="chain" id="PRO_0000150901" description="Trans-acting factor C">
    <location>
        <begin position="1"/>
        <end position="178"/>
    </location>
</feature>
<organism>
    <name type="scientific">Zygosaccharomyces bisporus</name>
    <dbReference type="NCBI Taxonomy" id="4957"/>
    <lineage>
        <taxon>Eukaryota</taxon>
        <taxon>Fungi</taxon>
        <taxon>Dikarya</taxon>
        <taxon>Ascomycota</taxon>
        <taxon>Saccharomycotina</taxon>
        <taxon>Saccharomycetes</taxon>
        <taxon>Saccharomycetales</taxon>
        <taxon>Saccharomycetaceae</taxon>
        <taxon>Zygosaccharomyces</taxon>
    </lineage>
</organism>